<evidence type="ECO:0000250" key="1"/>
<evidence type="ECO:0000250" key="2">
    <source>
        <dbReference type="UniProtKB" id="Q2UP89"/>
    </source>
</evidence>
<evidence type="ECO:0000250" key="3">
    <source>
        <dbReference type="UniProtKB" id="Q8WZI8"/>
    </source>
</evidence>
<evidence type="ECO:0000255" key="4"/>
<evidence type="ECO:0000305" key="5"/>
<reference key="1">
    <citation type="journal article" date="2008" name="PLoS Genet.">
        <title>Genomic islands in the pathogenic filamentous fungus Aspergillus fumigatus.</title>
        <authorList>
            <person name="Fedorova N.D."/>
            <person name="Khaldi N."/>
            <person name="Joardar V.S."/>
            <person name="Maiti R."/>
            <person name="Amedeo P."/>
            <person name="Anderson M.J."/>
            <person name="Crabtree J."/>
            <person name="Silva J.C."/>
            <person name="Badger J.H."/>
            <person name="Albarraq A."/>
            <person name="Angiuoli S."/>
            <person name="Bussey H."/>
            <person name="Bowyer P."/>
            <person name="Cotty P.J."/>
            <person name="Dyer P.S."/>
            <person name="Egan A."/>
            <person name="Galens K."/>
            <person name="Fraser-Liggett C.M."/>
            <person name="Haas B.J."/>
            <person name="Inman J.M."/>
            <person name="Kent R."/>
            <person name="Lemieux S."/>
            <person name="Malavazi I."/>
            <person name="Orvis J."/>
            <person name="Roemer T."/>
            <person name="Ronning C.M."/>
            <person name="Sundaram J.P."/>
            <person name="Sutton G."/>
            <person name="Turner G."/>
            <person name="Venter J.C."/>
            <person name="White O.R."/>
            <person name="Whitty B.R."/>
            <person name="Youngman P."/>
            <person name="Wolfe K.H."/>
            <person name="Goldman G.H."/>
            <person name="Wortman J.R."/>
            <person name="Jiang B."/>
            <person name="Denning D.W."/>
            <person name="Nierman W.C."/>
        </authorList>
    </citation>
    <scope>NUCLEOTIDE SEQUENCE [LARGE SCALE GENOMIC DNA]</scope>
    <source>
        <strain>CBS 144.89 / FGSC A1163 / CEA10</strain>
    </source>
</reference>
<keyword id="KW-0106">Calcium</keyword>
<keyword id="KW-0119">Carbohydrate metabolism</keyword>
<keyword id="KW-1015">Disulfide bond</keyword>
<keyword id="KW-0325">Glycoprotein</keyword>
<keyword id="KW-0378">Hydrolase</keyword>
<keyword id="KW-0479">Metal-binding</keyword>
<keyword id="KW-0624">Polysaccharide degradation</keyword>
<keyword id="KW-0964">Secreted</keyword>
<keyword id="KW-0719">Serine esterase</keyword>
<keyword id="KW-0732">Signal</keyword>
<keyword id="KW-0858">Xylan degradation</keyword>
<dbReference type="EC" id="3.1.1.73" evidence="3"/>
<dbReference type="EMBL" id="DS499602">
    <property type="protein sequence ID" value="EDP47853.1"/>
    <property type="molecule type" value="Genomic_DNA"/>
</dbReference>
<dbReference type="SMR" id="B0YDW9"/>
<dbReference type="ESTHER" id="aspfu-faeb1">
    <property type="family name" value="Tannase"/>
</dbReference>
<dbReference type="GlyCosmos" id="B0YDW9">
    <property type="glycosylation" value="5 sites, No reported glycans"/>
</dbReference>
<dbReference type="EnsemblFungi" id="EDP47853">
    <property type="protein sequence ID" value="EDP47853"/>
    <property type="gene ID" value="AFUB_097070"/>
</dbReference>
<dbReference type="VEuPathDB" id="FungiDB:AFUB_097070"/>
<dbReference type="HOGENOM" id="CLU_014819_1_0_1"/>
<dbReference type="OrthoDB" id="4157at5052"/>
<dbReference type="PhylomeDB" id="B0YDW9"/>
<dbReference type="Proteomes" id="UP000001699">
    <property type="component" value="Unassembled WGS sequence"/>
</dbReference>
<dbReference type="GO" id="GO:0005576">
    <property type="term" value="C:extracellular region"/>
    <property type="evidence" value="ECO:0007669"/>
    <property type="project" value="UniProtKB-SubCell"/>
</dbReference>
<dbReference type="GO" id="GO:0030600">
    <property type="term" value="F:feruloyl esterase activity"/>
    <property type="evidence" value="ECO:0007669"/>
    <property type="project" value="UniProtKB-EC"/>
</dbReference>
<dbReference type="GO" id="GO:0046872">
    <property type="term" value="F:metal ion binding"/>
    <property type="evidence" value="ECO:0007669"/>
    <property type="project" value="UniProtKB-KW"/>
</dbReference>
<dbReference type="GO" id="GO:0045493">
    <property type="term" value="P:xylan catabolic process"/>
    <property type="evidence" value="ECO:0007669"/>
    <property type="project" value="UniProtKB-KW"/>
</dbReference>
<dbReference type="Gene3D" id="3.40.50.1820">
    <property type="entry name" value="alpha/beta hydrolase"/>
    <property type="match status" value="1"/>
</dbReference>
<dbReference type="InterPro" id="IPR029058">
    <property type="entry name" value="AB_hydrolase_fold"/>
</dbReference>
<dbReference type="InterPro" id="IPR011118">
    <property type="entry name" value="Tannase/feruloyl_esterase"/>
</dbReference>
<dbReference type="PANTHER" id="PTHR33938">
    <property type="entry name" value="FERULOYL ESTERASE B-RELATED"/>
    <property type="match status" value="1"/>
</dbReference>
<dbReference type="PANTHER" id="PTHR33938:SF15">
    <property type="entry name" value="FERULOYL ESTERASE B-RELATED"/>
    <property type="match status" value="1"/>
</dbReference>
<dbReference type="Pfam" id="PF07519">
    <property type="entry name" value="Tannase"/>
    <property type="match status" value="1"/>
</dbReference>
<dbReference type="SUPFAM" id="SSF53474">
    <property type="entry name" value="alpha/beta-Hydrolases"/>
    <property type="match status" value="1"/>
</dbReference>
<feature type="signal peptide" evidence="4">
    <location>
        <begin position="1"/>
        <end position="19"/>
    </location>
</feature>
<feature type="chain" id="PRO_0000394921" description="Probable feruloyl esterase B-1">
    <location>
        <begin position="20"/>
        <end position="528"/>
    </location>
</feature>
<feature type="active site" description="Acyl-ester intermediate" evidence="2">
    <location>
        <position position="191"/>
    </location>
</feature>
<feature type="active site" description="Charge relay system" evidence="2">
    <location>
        <position position="404"/>
    </location>
</feature>
<feature type="active site" description="Charge relay system" evidence="2">
    <location>
        <position position="444"/>
    </location>
</feature>
<feature type="binding site" evidence="2">
    <location>
        <position position="260"/>
    </location>
    <ligand>
        <name>Ca(2+)</name>
        <dbReference type="ChEBI" id="CHEBI:29108"/>
    </ligand>
</feature>
<feature type="binding site" evidence="2">
    <location>
        <position position="263"/>
    </location>
    <ligand>
        <name>Ca(2+)</name>
        <dbReference type="ChEBI" id="CHEBI:29108"/>
    </ligand>
</feature>
<feature type="binding site" evidence="2">
    <location>
        <position position="265"/>
    </location>
    <ligand>
        <name>Ca(2+)</name>
        <dbReference type="ChEBI" id="CHEBI:29108"/>
    </ligand>
</feature>
<feature type="binding site" evidence="2">
    <location>
        <position position="267"/>
    </location>
    <ligand>
        <name>Ca(2+)</name>
        <dbReference type="ChEBI" id="CHEBI:29108"/>
    </ligand>
</feature>
<feature type="binding site" evidence="2">
    <location>
        <position position="269"/>
    </location>
    <ligand>
        <name>Ca(2+)</name>
        <dbReference type="ChEBI" id="CHEBI:29108"/>
    </ligand>
</feature>
<feature type="glycosylation site" description="N-linked (GlcNAc...) asparagine" evidence="4">
    <location>
        <position position="83"/>
    </location>
</feature>
<feature type="glycosylation site" description="N-linked (GlcNAc...) asparagine" evidence="4">
    <location>
        <position position="101"/>
    </location>
</feature>
<feature type="glycosylation site" description="N-linked (GlcNAc...) asparagine" evidence="4">
    <location>
        <position position="286"/>
    </location>
</feature>
<feature type="glycosylation site" description="N-linked (GlcNAc...) asparagine" evidence="4">
    <location>
        <position position="354"/>
    </location>
</feature>
<feature type="glycosylation site" description="N-linked (GlcNAc...) asparagine" evidence="4">
    <location>
        <position position="385"/>
    </location>
</feature>
<feature type="disulfide bond" evidence="2">
    <location>
        <begin position="29"/>
        <end position="78"/>
    </location>
</feature>
<feature type="disulfide bond" evidence="2">
    <location>
        <begin position="64"/>
        <end position="117"/>
    </location>
</feature>
<feature type="disulfide bond" evidence="2">
    <location>
        <begin position="190"/>
        <end position="445"/>
    </location>
</feature>
<feature type="disulfide bond" evidence="2">
    <location>
        <begin position="259"/>
        <end position="276"/>
    </location>
</feature>
<feature type="disulfide bond" evidence="2">
    <location>
        <begin position="285"/>
        <end position="295"/>
    </location>
</feature>
<feature type="disulfide bond" evidence="2">
    <location>
        <begin position="505"/>
        <end position="527"/>
    </location>
</feature>
<name>FAEB1_ASPFC</name>
<proteinExistence type="inferred from homology"/>
<gene>
    <name type="primary">faeB-1</name>
    <name type="ORF">AFUB_097070</name>
</gene>
<protein>
    <recommendedName>
        <fullName>Probable feruloyl esterase B-1</fullName>
        <ecNumber evidence="3">3.1.1.73</ecNumber>
    </recommendedName>
    <alternativeName>
        <fullName>Ferulic acid esterase B-1</fullName>
        <shortName>FAEB-1</shortName>
    </alternativeName>
</protein>
<comment type="function">
    <text evidence="3">Involved in degradation of plant cell walls. Hydrolyzes the feruloyl-arabinose ester bond in arabinoxylans as well as the feruloyl-galactose and feruloyl-arabinose ester bonds in pectin.</text>
</comment>
<comment type="catalytic activity">
    <reaction evidence="3">
        <text>feruloyl-polysaccharide + H2O = ferulate + polysaccharide.</text>
        <dbReference type="EC" id="3.1.1.73"/>
    </reaction>
</comment>
<comment type="subcellular location">
    <subcellularLocation>
        <location evidence="1">Secreted</location>
    </subcellularLocation>
</comment>
<comment type="similarity">
    <text evidence="5">Belongs to the tannase family.</text>
</comment>
<organism>
    <name type="scientific">Aspergillus fumigatus (strain CBS 144.89 / FGSC A1163 / CEA10)</name>
    <name type="common">Neosartorya fumigata</name>
    <dbReference type="NCBI Taxonomy" id="451804"/>
    <lineage>
        <taxon>Eukaryota</taxon>
        <taxon>Fungi</taxon>
        <taxon>Dikarya</taxon>
        <taxon>Ascomycota</taxon>
        <taxon>Pezizomycotina</taxon>
        <taxon>Eurotiomycetes</taxon>
        <taxon>Eurotiomycetidae</taxon>
        <taxon>Eurotiales</taxon>
        <taxon>Aspergillaceae</taxon>
        <taxon>Aspergillus</taxon>
        <taxon>Aspergillus subgen. Fumigati</taxon>
    </lineage>
</organism>
<sequence>MMWWFLLIGLASAAATASSASSASFESRCQHFHKEIHLQNVHVLSTTYVPIGSNIPMVYNPPICGGTASSSISTIQFCQVALNVTTSDKSQFFMEAWLPSNYTGRFLSTGNGGLNGCVSYADMVYATQYGFATIGTNNGHFGDTGQYFLNNPEVIEDFAYRALHTGTVVGKALTKLFYPQGYKNSYYLGCSTGGRQGWKSIQRFPDDFDGVVAGAPAINFVNLCSWGSRFLKITGPPGSETFVTSAQWSAVHNEILRQCDALDGAVDGIIEDTDLCQPVFETLLCNSTAVDKTSCLTGVQANTVNEVFSAMYGLDGKWLYPRMQPGSELAASFIYYSGNGFKYSDDWYKYVVYNDSNWDHSTWTLADAAAAAAQDPFQISSFDGNISGFQKAGGKVLHYHGLEDAIITSDSSKAYYKHVADTMGLSPSELDHFYRLFPISGMGHCSPGTGAASIGQGSSTYAGDDPQDNVLMAIVQWVEKGIAPEYVRGSKMSRDGTIDYRRKHCKYPKRNRYVGPGKYTDENAWKCV</sequence>
<accession>B0YDW9</accession>